<accession>B4KTH6</accession>
<proteinExistence type="inferred from homology"/>
<comment type="function">
    <text evidence="1">Component of the eukaryotic translation initiation factor 3 (eIF-3) complex, which is involved in protein synthesis of a specialized repertoire of mRNAs and, together with other initiation factors, stimulates binding of mRNA and methionyl-tRNAi to the 40S ribosome. The eIF-3 complex specifically targets and initiates translation of a subset of mRNAs involved in cell proliferation.</text>
</comment>
<comment type="subunit">
    <text evidence="1">Component of the eukaryotic translation initiation factor 3 (eIF-3) complex. The eIF-3 complex interacts with pix.</text>
</comment>
<comment type="subcellular location">
    <subcellularLocation>
        <location evidence="1">Cytoplasm</location>
    </subcellularLocation>
</comment>
<comment type="similarity">
    <text evidence="1">Belongs to the eIF-3 subunit J family.</text>
</comment>
<gene>
    <name evidence="1" type="primary">eIF3j</name>
    <name evidence="1" type="synonym">Adam</name>
    <name type="ORF">GI20018</name>
</gene>
<reference key="1">
    <citation type="journal article" date="2007" name="Nature">
        <title>Evolution of genes and genomes on the Drosophila phylogeny.</title>
        <authorList>
            <consortium name="Drosophila 12 genomes consortium"/>
        </authorList>
    </citation>
    <scope>NUCLEOTIDE SEQUENCE [LARGE SCALE GENOMIC DNA]</scope>
    <source>
        <strain>Tucson 15081-1352.22</strain>
    </source>
</reference>
<keyword id="KW-0175">Coiled coil</keyword>
<keyword id="KW-0963">Cytoplasm</keyword>
<keyword id="KW-0396">Initiation factor</keyword>
<keyword id="KW-0648">Protein biosynthesis</keyword>
<keyword id="KW-1185">Reference proteome</keyword>
<feature type="chain" id="PRO_0000365136" description="Eukaryotic translation initiation factor 3 subunit J">
    <location>
        <begin position="1"/>
        <end position="236"/>
    </location>
</feature>
<feature type="region of interest" description="Disordered" evidence="2">
    <location>
        <begin position="1"/>
        <end position="86"/>
    </location>
</feature>
<feature type="coiled-coil region" evidence="1">
    <location>
        <begin position="61"/>
        <end position="115"/>
    </location>
</feature>
<feature type="compositionally biased region" description="Acidic residues" evidence="2">
    <location>
        <begin position="28"/>
        <end position="46"/>
    </location>
</feature>
<feature type="compositionally biased region" description="Basic and acidic residues" evidence="2">
    <location>
        <begin position="47"/>
        <end position="58"/>
    </location>
</feature>
<feature type="compositionally biased region" description="Basic and acidic residues" evidence="2">
    <location>
        <begin position="68"/>
        <end position="86"/>
    </location>
</feature>
<evidence type="ECO:0000255" key="1">
    <source>
        <dbReference type="HAMAP-Rule" id="MF_03009"/>
    </source>
</evidence>
<evidence type="ECO:0000256" key="2">
    <source>
        <dbReference type="SAM" id="MobiDB-lite"/>
    </source>
</evidence>
<organism>
    <name type="scientific">Drosophila mojavensis</name>
    <name type="common">Fruit fly</name>
    <dbReference type="NCBI Taxonomy" id="7230"/>
    <lineage>
        <taxon>Eukaryota</taxon>
        <taxon>Metazoa</taxon>
        <taxon>Ecdysozoa</taxon>
        <taxon>Arthropoda</taxon>
        <taxon>Hexapoda</taxon>
        <taxon>Insecta</taxon>
        <taxon>Pterygota</taxon>
        <taxon>Neoptera</taxon>
        <taxon>Endopterygota</taxon>
        <taxon>Diptera</taxon>
        <taxon>Brachycera</taxon>
        <taxon>Muscomorpha</taxon>
        <taxon>Ephydroidea</taxon>
        <taxon>Drosophilidae</taxon>
        <taxon>Drosophila</taxon>
    </lineage>
</organism>
<sequence length="236" mass="26983">MADDWESAADSEIVIRPNAANNINKWEGEDDDEDVKESWEDEEEKKDEEKPTKTEAPVKTKPNKALKAKLEEQERLKEEEEQKRLAEMTPEEKLAEKLRLQKIQEESDLKSALETFGVTSIGGGLDAFNPESKEEFKEFGATLSWKVAQYRESIHFPQFIEDLVRSLCCNLSAADIKKVKMSVESLHSEKLKMEKAAAKKSAMKGKGKVSLRTENDDIDGYQKYGNDFTDDYDDFM</sequence>
<dbReference type="EMBL" id="CH933808">
    <property type="protein sequence ID" value="EDW08537.1"/>
    <property type="molecule type" value="Genomic_DNA"/>
</dbReference>
<dbReference type="SMR" id="B4KTH6"/>
<dbReference type="FunCoup" id="B4KTH6">
    <property type="interactions" value="1610"/>
</dbReference>
<dbReference type="EnsemblMetazoa" id="FBtr0170743">
    <property type="protein sequence ID" value="FBpp0169235"/>
    <property type="gene ID" value="FBgn0142754"/>
</dbReference>
<dbReference type="EnsemblMetazoa" id="XM_002004566.4">
    <property type="protein sequence ID" value="XP_002004602.1"/>
    <property type="gene ID" value="LOC6578694"/>
</dbReference>
<dbReference type="GeneID" id="6578694"/>
<dbReference type="KEGG" id="dmo:Dmoj_GI20018"/>
<dbReference type="CTD" id="8669"/>
<dbReference type="eggNOG" id="KOG4813">
    <property type="taxonomic scope" value="Eukaryota"/>
</dbReference>
<dbReference type="HOGENOM" id="CLU_085806_2_0_1"/>
<dbReference type="InParanoid" id="B4KTH6"/>
<dbReference type="OMA" id="KPHYALW"/>
<dbReference type="OrthoDB" id="20381at2759"/>
<dbReference type="PhylomeDB" id="B4KTH6"/>
<dbReference type="ChiTaRS" id="Adam">
    <property type="organism name" value="fly"/>
</dbReference>
<dbReference type="Proteomes" id="UP000009192">
    <property type="component" value="Unassembled WGS sequence"/>
</dbReference>
<dbReference type="GO" id="GO:0016282">
    <property type="term" value="C:eukaryotic 43S preinitiation complex"/>
    <property type="evidence" value="ECO:0007669"/>
    <property type="project" value="UniProtKB-UniRule"/>
</dbReference>
<dbReference type="GO" id="GO:0033290">
    <property type="term" value="C:eukaryotic 48S preinitiation complex"/>
    <property type="evidence" value="ECO:0007669"/>
    <property type="project" value="UniProtKB-UniRule"/>
</dbReference>
<dbReference type="GO" id="GO:0005852">
    <property type="term" value="C:eukaryotic translation initiation factor 3 complex"/>
    <property type="evidence" value="ECO:0007669"/>
    <property type="project" value="UniProtKB-UniRule"/>
</dbReference>
<dbReference type="GO" id="GO:0003743">
    <property type="term" value="F:translation initiation factor activity"/>
    <property type="evidence" value="ECO:0007669"/>
    <property type="project" value="UniProtKB-UniRule"/>
</dbReference>
<dbReference type="GO" id="GO:0001732">
    <property type="term" value="P:formation of cytoplasmic translation initiation complex"/>
    <property type="evidence" value="ECO:0007669"/>
    <property type="project" value="UniProtKB-UniRule"/>
</dbReference>
<dbReference type="GO" id="GO:0006446">
    <property type="term" value="P:regulation of translational initiation"/>
    <property type="evidence" value="ECO:0007669"/>
    <property type="project" value="EnsemblMetazoa"/>
</dbReference>
<dbReference type="Gene3D" id="1.10.246.60">
    <property type="entry name" value="Eukaryotic translation initiation factor 3 like domains"/>
    <property type="match status" value="1"/>
</dbReference>
<dbReference type="HAMAP" id="MF_03009">
    <property type="entry name" value="eIF3j"/>
    <property type="match status" value="1"/>
</dbReference>
<dbReference type="InterPro" id="IPR023194">
    <property type="entry name" value="eIF3-like_dom_sf"/>
</dbReference>
<dbReference type="InterPro" id="IPR013906">
    <property type="entry name" value="eIF3j"/>
</dbReference>
<dbReference type="PANTHER" id="PTHR21681">
    <property type="entry name" value="EUKARYOTIC TRANSLATION INITIATION FACTOR 3 SUBUNIT J"/>
    <property type="match status" value="1"/>
</dbReference>
<dbReference type="PANTHER" id="PTHR21681:SF0">
    <property type="entry name" value="EUKARYOTIC TRANSLATION INITIATION FACTOR 3 SUBUNIT J"/>
    <property type="match status" value="1"/>
</dbReference>
<dbReference type="Pfam" id="PF08597">
    <property type="entry name" value="eIF3_subunit"/>
    <property type="match status" value="1"/>
</dbReference>
<name>EIF3J_DROMO</name>
<protein>
    <recommendedName>
        <fullName evidence="1">Eukaryotic translation initiation factor 3 subunit J</fullName>
        <shortName evidence="1">eIF3j</shortName>
    </recommendedName>
</protein>